<feature type="chain" id="PRO_0000201302" description="Thiol:disulfide interchange protein DsbE">
    <location>
        <begin position="1"/>
        <end position="185"/>
    </location>
</feature>
<feature type="topological domain" description="Cytoplasmic" evidence="2">
    <location>
        <begin position="1"/>
        <end position="4"/>
    </location>
</feature>
<feature type="transmembrane region" description="Helical" evidence="2">
    <location>
        <begin position="5"/>
        <end position="25"/>
    </location>
</feature>
<feature type="topological domain" description="Periplasmic" evidence="2">
    <location>
        <begin position="26"/>
        <end position="185"/>
    </location>
</feature>
<feature type="domain" description="Thioredoxin" evidence="3">
    <location>
        <begin position="39"/>
        <end position="177"/>
    </location>
</feature>
<feature type="disulfide bond" description="Redox-active" evidence="3">
    <location>
        <begin position="80"/>
        <end position="83"/>
    </location>
</feature>
<gene>
    <name type="primary">dsbE</name>
    <name type="synonym">ccmG</name>
    <name type="ordered locus">SF2279</name>
    <name type="ordered locus">S2409</name>
</gene>
<dbReference type="EMBL" id="AE005674">
    <property type="protein sequence ID" value="AAN43798.1"/>
    <property type="molecule type" value="Genomic_DNA"/>
</dbReference>
<dbReference type="EMBL" id="AE014073">
    <property type="protein sequence ID" value="AAP17615.1"/>
    <property type="molecule type" value="Genomic_DNA"/>
</dbReference>
<dbReference type="RefSeq" id="NP_708091.1">
    <property type="nucleotide sequence ID" value="NC_004337.2"/>
</dbReference>
<dbReference type="RefSeq" id="WP_000824439.1">
    <property type="nucleotide sequence ID" value="NZ_WPGW01000022.1"/>
</dbReference>
<dbReference type="BMRB" id="P0AA88"/>
<dbReference type="SMR" id="P0AA88"/>
<dbReference type="STRING" id="198214.SF2279"/>
<dbReference type="PaxDb" id="198214-SF2279"/>
<dbReference type="GeneID" id="1027269"/>
<dbReference type="GeneID" id="93774983"/>
<dbReference type="KEGG" id="sfl:SF2279"/>
<dbReference type="KEGG" id="sfx:S2409"/>
<dbReference type="PATRIC" id="fig|198214.7.peg.2730"/>
<dbReference type="HOGENOM" id="CLU_042529_19_1_6"/>
<dbReference type="Proteomes" id="UP000001006">
    <property type="component" value="Chromosome"/>
</dbReference>
<dbReference type="Proteomes" id="UP000002673">
    <property type="component" value="Chromosome"/>
</dbReference>
<dbReference type="GO" id="GO:0030288">
    <property type="term" value="C:outer membrane-bounded periplasmic space"/>
    <property type="evidence" value="ECO:0007669"/>
    <property type="project" value="InterPro"/>
</dbReference>
<dbReference type="GO" id="GO:0005886">
    <property type="term" value="C:plasma membrane"/>
    <property type="evidence" value="ECO:0007669"/>
    <property type="project" value="UniProtKB-SubCell"/>
</dbReference>
<dbReference type="GO" id="GO:0015036">
    <property type="term" value="F:disulfide oxidoreductase activity"/>
    <property type="evidence" value="ECO:0007669"/>
    <property type="project" value="InterPro"/>
</dbReference>
<dbReference type="GO" id="GO:0017004">
    <property type="term" value="P:cytochrome complex assembly"/>
    <property type="evidence" value="ECO:0007669"/>
    <property type="project" value="UniProtKB-KW"/>
</dbReference>
<dbReference type="CDD" id="cd03010">
    <property type="entry name" value="TlpA_like_DsbE"/>
    <property type="match status" value="1"/>
</dbReference>
<dbReference type="FunFam" id="3.40.30.10:FF:000040">
    <property type="entry name" value="Thiol:disulfide interchange protein DsbE"/>
    <property type="match status" value="1"/>
</dbReference>
<dbReference type="Gene3D" id="3.40.30.10">
    <property type="entry name" value="Glutaredoxin"/>
    <property type="match status" value="1"/>
</dbReference>
<dbReference type="InterPro" id="IPR004799">
    <property type="entry name" value="Periplasmic_diS_OxRdtase_DsbE"/>
</dbReference>
<dbReference type="InterPro" id="IPR013740">
    <property type="entry name" value="Redoxin"/>
</dbReference>
<dbReference type="InterPro" id="IPR036249">
    <property type="entry name" value="Thioredoxin-like_sf"/>
</dbReference>
<dbReference type="InterPro" id="IPR017937">
    <property type="entry name" value="Thioredoxin_CS"/>
</dbReference>
<dbReference type="InterPro" id="IPR013766">
    <property type="entry name" value="Thioredoxin_domain"/>
</dbReference>
<dbReference type="InterPro" id="IPR050553">
    <property type="entry name" value="Thioredoxin_ResA/DsbE_sf"/>
</dbReference>
<dbReference type="NCBIfam" id="TIGR00385">
    <property type="entry name" value="dsbE"/>
    <property type="match status" value="1"/>
</dbReference>
<dbReference type="NCBIfam" id="NF011941">
    <property type="entry name" value="PRK15412.1"/>
    <property type="match status" value="1"/>
</dbReference>
<dbReference type="PANTHER" id="PTHR42852">
    <property type="entry name" value="THIOL:DISULFIDE INTERCHANGE PROTEIN DSBE"/>
    <property type="match status" value="1"/>
</dbReference>
<dbReference type="PANTHER" id="PTHR42852:SF6">
    <property type="entry name" value="THIOL:DISULFIDE INTERCHANGE PROTEIN DSBE"/>
    <property type="match status" value="1"/>
</dbReference>
<dbReference type="Pfam" id="PF08534">
    <property type="entry name" value="Redoxin"/>
    <property type="match status" value="1"/>
</dbReference>
<dbReference type="SUPFAM" id="SSF52833">
    <property type="entry name" value="Thioredoxin-like"/>
    <property type="match status" value="1"/>
</dbReference>
<dbReference type="PROSITE" id="PS00194">
    <property type="entry name" value="THIOREDOXIN_1"/>
    <property type="match status" value="1"/>
</dbReference>
<dbReference type="PROSITE" id="PS51352">
    <property type="entry name" value="THIOREDOXIN_2"/>
    <property type="match status" value="1"/>
</dbReference>
<comment type="function">
    <text evidence="1">Involved in disulfide bond formation. Catalyzes a late, reductive step in the assembly of periplasmic c-type cytochromes, probably the reduction of disulfide bonds of the apocytochrome c to allow covalent linkage with the heme. Possible subunit of a heme lyase (By similarity).</text>
</comment>
<comment type="subcellular location">
    <subcellularLocation>
        <location evidence="1">Cell inner membrane</location>
        <topology evidence="1">Single-pass membrane protein</topology>
        <orientation evidence="1">Periplasmic side</orientation>
    </subcellularLocation>
</comment>
<comment type="similarity">
    <text evidence="4">Belongs to the thioredoxin family. DsbE subfamily.</text>
</comment>
<proteinExistence type="inferred from homology"/>
<evidence type="ECO:0000250" key="1"/>
<evidence type="ECO:0000255" key="2"/>
<evidence type="ECO:0000255" key="3">
    <source>
        <dbReference type="PROSITE-ProRule" id="PRU00691"/>
    </source>
</evidence>
<evidence type="ECO:0000305" key="4"/>
<sequence length="185" mass="20809">MKRKVLLIPLIIFLAIAAALLWQLARNAEGDDPTNLESALIGKPVPKFRLESLDNPGQFYQADVLTQGKPVLLNVWATWCPTCRAEHQYLNQLSAQGIRVVGMNYKDDRQKAISWLKELGNPYALSLFDGDGMLGLDLGVYGAPETFLIDGNGIIRYRHAGDLNPRVWEEEIKPLWEKYSKEAAQ</sequence>
<name>DSBE_SHIFL</name>
<protein>
    <recommendedName>
        <fullName>Thiol:disulfide interchange protein DsbE</fullName>
    </recommendedName>
    <alternativeName>
        <fullName>Cytochrome c biogenesis protein CcmG</fullName>
    </alternativeName>
</protein>
<accession>P0AA88</accession>
<accession>P33926</accession>
<reference key="1">
    <citation type="journal article" date="2002" name="Nucleic Acids Res.">
        <title>Genome sequence of Shigella flexneri 2a: insights into pathogenicity through comparison with genomes of Escherichia coli K12 and O157.</title>
        <authorList>
            <person name="Jin Q."/>
            <person name="Yuan Z."/>
            <person name="Xu J."/>
            <person name="Wang Y."/>
            <person name="Shen Y."/>
            <person name="Lu W."/>
            <person name="Wang J."/>
            <person name="Liu H."/>
            <person name="Yang J."/>
            <person name="Yang F."/>
            <person name="Zhang X."/>
            <person name="Zhang J."/>
            <person name="Yang G."/>
            <person name="Wu H."/>
            <person name="Qu D."/>
            <person name="Dong J."/>
            <person name="Sun L."/>
            <person name="Xue Y."/>
            <person name="Zhao A."/>
            <person name="Gao Y."/>
            <person name="Zhu J."/>
            <person name="Kan B."/>
            <person name="Ding K."/>
            <person name="Chen S."/>
            <person name="Cheng H."/>
            <person name="Yao Z."/>
            <person name="He B."/>
            <person name="Chen R."/>
            <person name="Ma D."/>
            <person name="Qiang B."/>
            <person name="Wen Y."/>
            <person name="Hou Y."/>
            <person name="Yu J."/>
        </authorList>
    </citation>
    <scope>NUCLEOTIDE SEQUENCE [LARGE SCALE GENOMIC DNA]</scope>
    <source>
        <strain>301 / Serotype 2a</strain>
    </source>
</reference>
<reference key="2">
    <citation type="journal article" date="2003" name="Infect. Immun.">
        <title>Complete genome sequence and comparative genomics of Shigella flexneri serotype 2a strain 2457T.</title>
        <authorList>
            <person name="Wei J."/>
            <person name="Goldberg M.B."/>
            <person name="Burland V."/>
            <person name="Venkatesan M.M."/>
            <person name="Deng W."/>
            <person name="Fournier G."/>
            <person name="Mayhew G.F."/>
            <person name="Plunkett G. III"/>
            <person name="Rose D.J."/>
            <person name="Darling A."/>
            <person name="Mau B."/>
            <person name="Perna N.T."/>
            <person name="Payne S.M."/>
            <person name="Runyen-Janecky L.J."/>
            <person name="Zhou S."/>
            <person name="Schwartz D.C."/>
            <person name="Blattner F.R."/>
        </authorList>
    </citation>
    <scope>NUCLEOTIDE SEQUENCE [LARGE SCALE GENOMIC DNA]</scope>
    <source>
        <strain>ATCC 700930 / 2457T / Serotype 2a</strain>
    </source>
</reference>
<organism>
    <name type="scientific">Shigella flexneri</name>
    <dbReference type="NCBI Taxonomy" id="623"/>
    <lineage>
        <taxon>Bacteria</taxon>
        <taxon>Pseudomonadati</taxon>
        <taxon>Pseudomonadota</taxon>
        <taxon>Gammaproteobacteria</taxon>
        <taxon>Enterobacterales</taxon>
        <taxon>Enterobacteriaceae</taxon>
        <taxon>Shigella</taxon>
    </lineage>
</organism>
<keyword id="KW-0997">Cell inner membrane</keyword>
<keyword id="KW-1003">Cell membrane</keyword>
<keyword id="KW-0201">Cytochrome c-type biogenesis</keyword>
<keyword id="KW-1015">Disulfide bond</keyword>
<keyword id="KW-0472">Membrane</keyword>
<keyword id="KW-0676">Redox-active center</keyword>
<keyword id="KW-1185">Reference proteome</keyword>
<keyword id="KW-0812">Transmembrane</keyword>
<keyword id="KW-1133">Transmembrane helix</keyword>